<dbReference type="EC" id="1.3.5.2" evidence="1"/>
<dbReference type="EMBL" id="AP008957">
    <property type="protein sequence ID" value="BAH33919.1"/>
    <property type="molecule type" value="Genomic_DNA"/>
</dbReference>
<dbReference type="RefSeq" id="WP_020907828.1">
    <property type="nucleotide sequence ID" value="NC_012490.1"/>
</dbReference>
<dbReference type="SMR" id="C0ZZY4"/>
<dbReference type="KEGG" id="rer:RER_32110"/>
<dbReference type="PATRIC" id="fig|234621.6.peg.3717"/>
<dbReference type="eggNOG" id="COG0167">
    <property type="taxonomic scope" value="Bacteria"/>
</dbReference>
<dbReference type="HOGENOM" id="CLU_013640_2_0_11"/>
<dbReference type="UniPathway" id="UPA00070">
    <property type="reaction ID" value="UER00946"/>
</dbReference>
<dbReference type="Proteomes" id="UP000002204">
    <property type="component" value="Chromosome"/>
</dbReference>
<dbReference type="GO" id="GO:0005737">
    <property type="term" value="C:cytoplasm"/>
    <property type="evidence" value="ECO:0007669"/>
    <property type="project" value="InterPro"/>
</dbReference>
<dbReference type="GO" id="GO:0005886">
    <property type="term" value="C:plasma membrane"/>
    <property type="evidence" value="ECO:0007669"/>
    <property type="project" value="UniProtKB-SubCell"/>
</dbReference>
<dbReference type="GO" id="GO:0106430">
    <property type="term" value="F:dihydroorotate dehydrogenase (quinone) activity"/>
    <property type="evidence" value="ECO:0007669"/>
    <property type="project" value="UniProtKB-EC"/>
</dbReference>
<dbReference type="GO" id="GO:0006207">
    <property type="term" value="P:'de novo' pyrimidine nucleobase biosynthetic process"/>
    <property type="evidence" value="ECO:0007669"/>
    <property type="project" value="InterPro"/>
</dbReference>
<dbReference type="GO" id="GO:0044205">
    <property type="term" value="P:'de novo' UMP biosynthetic process"/>
    <property type="evidence" value="ECO:0007669"/>
    <property type="project" value="UniProtKB-UniRule"/>
</dbReference>
<dbReference type="CDD" id="cd04738">
    <property type="entry name" value="DHOD_2_like"/>
    <property type="match status" value="1"/>
</dbReference>
<dbReference type="FunFam" id="3.20.20.70:FF:000123">
    <property type="entry name" value="Dihydroorotate dehydrogenase (quinone)"/>
    <property type="match status" value="1"/>
</dbReference>
<dbReference type="Gene3D" id="3.20.20.70">
    <property type="entry name" value="Aldolase class I"/>
    <property type="match status" value="1"/>
</dbReference>
<dbReference type="HAMAP" id="MF_00225">
    <property type="entry name" value="DHO_dh_type2"/>
    <property type="match status" value="1"/>
</dbReference>
<dbReference type="InterPro" id="IPR013785">
    <property type="entry name" value="Aldolase_TIM"/>
</dbReference>
<dbReference type="InterPro" id="IPR050074">
    <property type="entry name" value="DHO_dehydrogenase"/>
</dbReference>
<dbReference type="InterPro" id="IPR005719">
    <property type="entry name" value="Dihydroorotate_DH_2"/>
</dbReference>
<dbReference type="InterPro" id="IPR005720">
    <property type="entry name" value="Dihydroorotate_DH_cat"/>
</dbReference>
<dbReference type="InterPro" id="IPR001295">
    <property type="entry name" value="Dihydroorotate_DH_CS"/>
</dbReference>
<dbReference type="NCBIfam" id="NF003645">
    <property type="entry name" value="PRK05286.1-2"/>
    <property type="match status" value="1"/>
</dbReference>
<dbReference type="NCBIfam" id="NF003648">
    <property type="entry name" value="PRK05286.2-1"/>
    <property type="match status" value="1"/>
</dbReference>
<dbReference type="NCBIfam" id="NF003652">
    <property type="entry name" value="PRK05286.2-5"/>
    <property type="match status" value="1"/>
</dbReference>
<dbReference type="NCBIfam" id="TIGR01036">
    <property type="entry name" value="pyrD_sub2"/>
    <property type="match status" value="1"/>
</dbReference>
<dbReference type="PANTHER" id="PTHR48109:SF4">
    <property type="entry name" value="DIHYDROOROTATE DEHYDROGENASE (QUINONE), MITOCHONDRIAL"/>
    <property type="match status" value="1"/>
</dbReference>
<dbReference type="PANTHER" id="PTHR48109">
    <property type="entry name" value="DIHYDROOROTATE DEHYDROGENASE (QUINONE), MITOCHONDRIAL-RELATED"/>
    <property type="match status" value="1"/>
</dbReference>
<dbReference type="Pfam" id="PF01180">
    <property type="entry name" value="DHO_dh"/>
    <property type="match status" value="1"/>
</dbReference>
<dbReference type="SUPFAM" id="SSF51395">
    <property type="entry name" value="FMN-linked oxidoreductases"/>
    <property type="match status" value="1"/>
</dbReference>
<dbReference type="PROSITE" id="PS00911">
    <property type="entry name" value="DHODEHASE_1"/>
    <property type="match status" value="1"/>
</dbReference>
<dbReference type="PROSITE" id="PS00912">
    <property type="entry name" value="DHODEHASE_2"/>
    <property type="match status" value="1"/>
</dbReference>
<keyword id="KW-1003">Cell membrane</keyword>
<keyword id="KW-0285">Flavoprotein</keyword>
<keyword id="KW-0288">FMN</keyword>
<keyword id="KW-0472">Membrane</keyword>
<keyword id="KW-0560">Oxidoreductase</keyword>
<keyword id="KW-0665">Pyrimidine biosynthesis</keyword>
<sequence length="356" mass="37623">MYQLLLSLMFRVPPERIHHIAFTAMKLVTRFAPLRWLVAKVLVVDDPVLRSQAFGLTFPAPLGLAAGFDKDATGVDAWGPLGFGFAEVGTVTAQAQPGNPAPRLFRLPADRALINRMGFNNHGAGHAANFLRQRRVTVPIGANIGKTKIVEAVDAAADYTASAQLLGPLADFMVVNVSSPNTPGLRDLQAVESLRPILQAVLDTVSVPVLVKIAPDLSDEDVDAVADLAVELGLAGIVATNTTIRRDGLKTPDAEVAALGAGGLSGAPVADRSLEVLRRLYARVGDKMTIISVGGIETADQAWERILAGATLVQGYTGFIYGGPFWARSIHKGIAKRVRAAGFSSIAQAVGAENPR</sequence>
<protein>
    <recommendedName>
        <fullName evidence="1">Dihydroorotate dehydrogenase (quinone)</fullName>
        <ecNumber evidence="1">1.3.5.2</ecNumber>
    </recommendedName>
    <alternativeName>
        <fullName evidence="1">DHOdehase</fullName>
        <shortName evidence="1">DHOD</shortName>
        <shortName evidence="1">DHODase</shortName>
    </alternativeName>
    <alternativeName>
        <fullName evidence="1">Dihydroorotate oxidase</fullName>
    </alternativeName>
</protein>
<comment type="function">
    <text evidence="1">Catalyzes the conversion of dihydroorotate to orotate with quinone as electron acceptor.</text>
</comment>
<comment type="catalytic activity">
    <reaction evidence="1">
        <text>(S)-dihydroorotate + a quinone = orotate + a quinol</text>
        <dbReference type="Rhea" id="RHEA:30187"/>
        <dbReference type="ChEBI" id="CHEBI:24646"/>
        <dbReference type="ChEBI" id="CHEBI:30839"/>
        <dbReference type="ChEBI" id="CHEBI:30864"/>
        <dbReference type="ChEBI" id="CHEBI:132124"/>
        <dbReference type="EC" id="1.3.5.2"/>
    </reaction>
</comment>
<comment type="cofactor">
    <cofactor evidence="1">
        <name>FMN</name>
        <dbReference type="ChEBI" id="CHEBI:58210"/>
    </cofactor>
    <text evidence="1">Binds 1 FMN per subunit.</text>
</comment>
<comment type="pathway">
    <text evidence="1">Pyrimidine metabolism; UMP biosynthesis via de novo pathway; orotate from (S)-dihydroorotate (quinone route): step 1/1.</text>
</comment>
<comment type="subunit">
    <text evidence="1">Monomer.</text>
</comment>
<comment type="subcellular location">
    <subcellularLocation>
        <location evidence="1">Cell membrane</location>
        <topology evidence="1">Peripheral membrane protein</topology>
    </subcellularLocation>
</comment>
<comment type="similarity">
    <text evidence="1">Belongs to the dihydroorotate dehydrogenase family. Type 2 subfamily.</text>
</comment>
<proteinExistence type="inferred from homology"/>
<reference key="1">
    <citation type="submission" date="2005-03" db="EMBL/GenBank/DDBJ databases">
        <title>Comparison of the complete genome sequences of Rhodococcus erythropolis PR4 and Rhodococcus opacus B4.</title>
        <authorList>
            <person name="Takarada H."/>
            <person name="Sekine M."/>
            <person name="Hosoyama A."/>
            <person name="Yamada R."/>
            <person name="Fujisawa T."/>
            <person name="Omata S."/>
            <person name="Shimizu A."/>
            <person name="Tsukatani N."/>
            <person name="Tanikawa S."/>
            <person name="Fujita N."/>
            <person name="Harayama S."/>
        </authorList>
    </citation>
    <scope>NUCLEOTIDE SEQUENCE [LARGE SCALE GENOMIC DNA]</scope>
    <source>
        <strain>PR4 / NBRC 100887</strain>
    </source>
</reference>
<evidence type="ECO:0000255" key="1">
    <source>
        <dbReference type="HAMAP-Rule" id="MF_00225"/>
    </source>
</evidence>
<gene>
    <name evidence="1" type="primary">pyrD</name>
    <name type="ordered locus">RER_32110</name>
</gene>
<organism>
    <name type="scientific">Rhodococcus erythropolis (strain PR4 / NBRC 100887)</name>
    <dbReference type="NCBI Taxonomy" id="234621"/>
    <lineage>
        <taxon>Bacteria</taxon>
        <taxon>Bacillati</taxon>
        <taxon>Actinomycetota</taxon>
        <taxon>Actinomycetes</taxon>
        <taxon>Mycobacteriales</taxon>
        <taxon>Nocardiaceae</taxon>
        <taxon>Rhodococcus</taxon>
        <taxon>Rhodococcus erythropolis group</taxon>
    </lineage>
</organism>
<name>PYRD_RHOE4</name>
<feature type="chain" id="PRO_1000204319" description="Dihydroorotate dehydrogenase (quinone)">
    <location>
        <begin position="1"/>
        <end position="356"/>
    </location>
</feature>
<feature type="active site" description="Nucleophile" evidence="1">
    <location>
        <position position="179"/>
    </location>
</feature>
<feature type="binding site" evidence="1">
    <location>
        <begin position="66"/>
        <end position="70"/>
    </location>
    <ligand>
        <name>FMN</name>
        <dbReference type="ChEBI" id="CHEBI:58210"/>
    </ligand>
</feature>
<feature type="binding site" evidence="1">
    <location>
        <position position="70"/>
    </location>
    <ligand>
        <name>substrate</name>
    </ligand>
</feature>
<feature type="binding site" evidence="1">
    <location>
        <position position="90"/>
    </location>
    <ligand>
        <name>FMN</name>
        <dbReference type="ChEBI" id="CHEBI:58210"/>
    </ligand>
</feature>
<feature type="binding site" evidence="1">
    <location>
        <begin position="115"/>
        <end position="119"/>
    </location>
    <ligand>
        <name>substrate</name>
    </ligand>
</feature>
<feature type="binding site" evidence="1">
    <location>
        <position position="143"/>
    </location>
    <ligand>
        <name>FMN</name>
        <dbReference type="ChEBI" id="CHEBI:58210"/>
    </ligand>
</feature>
<feature type="binding site" evidence="1">
    <location>
        <position position="176"/>
    </location>
    <ligand>
        <name>FMN</name>
        <dbReference type="ChEBI" id="CHEBI:58210"/>
    </ligand>
</feature>
<feature type="binding site" evidence="1">
    <location>
        <position position="176"/>
    </location>
    <ligand>
        <name>substrate</name>
    </ligand>
</feature>
<feature type="binding site" evidence="1">
    <location>
        <position position="181"/>
    </location>
    <ligand>
        <name>substrate</name>
    </ligand>
</feature>
<feature type="binding site" evidence="1">
    <location>
        <position position="212"/>
    </location>
    <ligand>
        <name>FMN</name>
        <dbReference type="ChEBI" id="CHEBI:58210"/>
    </ligand>
</feature>
<feature type="binding site" evidence="1">
    <location>
        <position position="240"/>
    </location>
    <ligand>
        <name>FMN</name>
        <dbReference type="ChEBI" id="CHEBI:58210"/>
    </ligand>
</feature>
<feature type="binding site" evidence="1">
    <location>
        <begin position="241"/>
        <end position="242"/>
    </location>
    <ligand>
        <name>substrate</name>
    </ligand>
</feature>
<feature type="binding site" evidence="1">
    <location>
        <position position="266"/>
    </location>
    <ligand>
        <name>FMN</name>
        <dbReference type="ChEBI" id="CHEBI:58210"/>
    </ligand>
</feature>
<feature type="binding site" evidence="1">
    <location>
        <position position="295"/>
    </location>
    <ligand>
        <name>FMN</name>
        <dbReference type="ChEBI" id="CHEBI:58210"/>
    </ligand>
</feature>
<feature type="binding site" evidence="1">
    <location>
        <begin position="316"/>
        <end position="317"/>
    </location>
    <ligand>
        <name>FMN</name>
        <dbReference type="ChEBI" id="CHEBI:58210"/>
    </ligand>
</feature>
<accession>C0ZZY4</accession>